<accession>B8ZKG0</accession>
<name>RL2_STRPJ</name>
<reference key="1">
    <citation type="journal article" date="2009" name="J. Bacteriol.">
        <title>Role of conjugative elements in the evolution of the multidrug-resistant pandemic clone Streptococcus pneumoniae Spain23F ST81.</title>
        <authorList>
            <person name="Croucher N.J."/>
            <person name="Walker D."/>
            <person name="Romero P."/>
            <person name="Lennard N."/>
            <person name="Paterson G.K."/>
            <person name="Bason N.C."/>
            <person name="Mitchell A.M."/>
            <person name="Quail M.A."/>
            <person name="Andrew P.W."/>
            <person name="Parkhill J."/>
            <person name="Bentley S.D."/>
            <person name="Mitchell T.J."/>
        </authorList>
    </citation>
    <scope>NUCLEOTIDE SEQUENCE [LARGE SCALE GENOMIC DNA]</scope>
    <source>
        <strain>ATCC 700669 / Spain 23F-1</strain>
    </source>
</reference>
<comment type="function">
    <text evidence="1">One of the primary rRNA binding proteins. Required for association of the 30S and 50S subunits to form the 70S ribosome, for tRNA binding and peptide bond formation. It has been suggested to have peptidyltransferase activity; this is somewhat controversial. Makes several contacts with the 16S rRNA in the 70S ribosome.</text>
</comment>
<comment type="subunit">
    <text evidence="1">Part of the 50S ribosomal subunit. Forms a bridge to the 30S subunit in the 70S ribosome.</text>
</comment>
<comment type="similarity">
    <text evidence="1">Belongs to the universal ribosomal protein uL2 family.</text>
</comment>
<proteinExistence type="inferred from homology"/>
<feature type="chain" id="PRO_1000165771" description="Large ribosomal subunit protein uL2">
    <location>
        <begin position="1"/>
        <end position="277"/>
    </location>
</feature>
<feature type="region of interest" description="Disordered" evidence="2">
    <location>
        <begin position="219"/>
        <end position="277"/>
    </location>
</feature>
<feature type="compositionally biased region" description="Basic and acidic residues" evidence="2">
    <location>
        <begin position="264"/>
        <end position="277"/>
    </location>
</feature>
<protein>
    <recommendedName>
        <fullName evidence="1">Large ribosomal subunit protein uL2</fullName>
    </recommendedName>
    <alternativeName>
        <fullName evidence="3">50S ribosomal protein L2</fullName>
    </alternativeName>
</protein>
<evidence type="ECO:0000255" key="1">
    <source>
        <dbReference type="HAMAP-Rule" id="MF_01320"/>
    </source>
</evidence>
<evidence type="ECO:0000256" key="2">
    <source>
        <dbReference type="SAM" id="MobiDB-lite"/>
    </source>
</evidence>
<evidence type="ECO:0000305" key="3"/>
<keyword id="KW-0687">Ribonucleoprotein</keyword>
<keyword id="KW-0689">Ribosomal protein</keyword>
<keyword id="KW-0694">RNA-binding</keyword>
<keyword id="KW-0699">rRNA-binding</keyword>
<dbReference type="EMBL" id="FM211187">
    <property type="protein sequence ID" value="CAR68062.1"/>
    <property type="molecule type" value="Genomic_DNA"/>
</dbReference>
<dbReference type="RefSeq" id="WP_000512911.1">
    <property type="nucleotide sequence ID" value="NC_011900.1"/>
</dbReference>
<dbReference type="SMR" id="B8ZKG0"/>
<dbReference type="GeneID" id="93738960"/>
<dbReference type="KEGG" id="sne:SPN23F02020"/>
<dbReference type="HOGENOM" id="CLU_036235_2_1_9"/>
<dbReference type="GO" id="GO:0015934">
    <property type="term" value="C:large ribosomal subunit"/>
    <property type="evidence" value="ECO:0007669"/>
    <property type="project" value="InterPro"/>
</dbReference>
<dbReference type="GO" id="GO:0019843">
    <property type="term" value="F:rRNA binding"/>
    <property type="evidence" value="ECO:0007669"/>
    <property type="project" value="UniProtKB-UniRule"/>
</dbReference>
<dbReference type="GO" id="GO:0003735">
    <property type="term" value="F:structural constituent of ribosome"/>
    <property type="evidence" value="ECO:0007669"/>
    <property type="project" value="InterPro"/>
</dbReference>
<dbReference type="GO" id="GO:0016740">
    <property type="term" value="F:transferase activity"/>
    <property type="evidence" value="ECO:0007669"/>
    <property type="project" value="InterPro"/>
</dbReference>
<dbReference type="GO" id="GO:0002181">
    <property type="term" value="P:cytoplasmic translation"/>
    <property type="evidence" value="ECO:0007669"/>
    <property type="project" value="TreeGrafter"/>
</dbReference>
<dbReference type="FunFam" id="2.30.30.30:FF:000001">
    <property type="entry name" value="50S ribosomal protein L2"/>
    <property type="match status" value="1"/>
</dbReference>
<dbReference type="FunFam" id="2.40.50.140:FF:000003">
    <property type="entry name" value="50S ribosomal protein L2"/>
    <property type="match status" value="1"/>
</dbReference>
<dbReference type="FunFam" id="4.10.950.10:FF:000001">
    <property type="entry name" value="50S ribosomal protein L2"/>
    <property type="match status" value="1"/>
</dbReference>
<dbReference type="Gene3D" id="2.30.30.30">
    <property type="match status" value="1"/>
</dbReference>
<dbReference type="Gene3D" id="2.40.50.140">
    <property type="entry name" value="Nucleic acid-binding proteins"/>
    <property type="match status" value="1"/>
</dbReference>
<dbReference type="Gene3D" id="4.10.950.10">
    <property type="entry name" value="Ribosomal protein L2, domain 3"/>
    <property type="match status" value="1"/>
</dbReference>
<dbReference type="HAMAP" id="MF_01320_B">
    <property type="entry name" value="Ribosomal_uL2_B"/>
    <property type="match status" value="1"/>
</dbReference>
<dbReference type="InterPro" id="IPR012340">
    <property type="entry name" value="NA-bd_OB-fold"/>
</dbReference>
<dbReference type="InterPro" id="IPR014722">
    <property type="entry name" value="Rib_uL2_dom2"/>
</dbReference>
<dbReference type="InterPro" id="IPR002171">
    <property type="entry name" value="Ribosomal_uL2"/>
</dbReference>
<dbReference type="InterPro" id="IPR005880">
    <property type="entry name" value="Ribosomal_uL2_bac/org-type"/>
</dbReference>
<dbReference type="InterPro" id="IPR022669">
    <property type="entry name" value="Ribosomal_uL2_C"/>
</dbReference>
<dbReference type="InterPro" id="IPR022671">
    <property type="entry name" value="Ribosomal_uL2_CS"/>
</dbReference>
<dbReference type="InterPro" id="IPR014726">
    <property type="entry name" value="Ribosomal_uL2_dom3"/>
</dbReference>
<dbReference type="InterPro" id="IPR022666">
    <property type="entry name" value="Ribosomal_uL2_RNA-bd_dom"/>
</dbReference>
<dbReference type="InterPro" id="IPR008991">
    <property type="entry name" value="Translation_prot_SH3-like_sf"/>
</dbReference>
<dbReference type="NCBIfam" id="TIGR01171">
    <property type="entry name" value="rplB_bact"/>
    <property type="match status" value="1"/>
</dbReference>
<dbReference type="PANTHER" id="PTHR13691:SF5">
    <property type="entry name" value="LARGE RIBOSOMAL SUBUNIT PROTEIN UL2M"/>
    <property type="match status" value="1"/>
</dbReference>
<dbReference type="PANTHER" id="PTHR13691">
    <property type="entry name" value="RIBOSOMAL PROTEIN L2"/>
    <property type="match status" value="1"/>
</dbReference>
<dbReference type="Pfam" id="PF00181">
    <property type="entry name" value="Ribosomal_L2"/>
    <property type="match status" value="1"/>
</dbReference>
<dbReference type="Pfam" id="PF03947">
    <property type="entry name" value="Ribosomal_L2_C"/>
    <property type="match status" value="1"/>
</dbReference>
<dbReference type="PIRSF" id="PIRSF002158">
    <property type="entry name" value="Ribosomal_L2"/>
    <property type="match status" value="1"/>
</dbReference>
<dbReference type="SMART" id="SM01383">
    <property type="entry name" value="Ribosomal_L2"/>
    <property type="match status" value="1"/>
</dbReference>
<dbReference type="SMART" id="SM01382">
    <property type="entry name" value="Ribosomal_L2_C"/>
    <property type="match status" value="1"/>
</dbReference>
<dbReference type="SUPFAM" id="SSF50249">
    <property type="entry name" value="Nucleic acid-binding proteins"/>
    <property type="match status" value="1"/>
</dbReference>
<dbReference type="SUPFAM" id="SSF50104">
    <property type="entry name" value="Translation proteins SH3-like domain"/>
    <property type="match status" value="1"/>
</dbReference>
<dbReference type="PROSITE" id="PS00467">
    <property type="entry name" value="RIBOSOMAL_L2"/>
    <property type="match status" value="1"/>
</dbReference>
<sequence>MGIRVYKPTTNGRRNMTSLDFAEITTSTPEKSLLVALKSKAGRNNNGRITVRHQGGGHKRFYRLVDFKRNKDNVEAVVKTIEYDPNRSANIALVHYTDGVKAYIIAPKGLEVGQRIVSGPEADIKVGNALPLANIPVGTLIHNIELKPGRGGELVRAAGASAQVLGSEGKYVLVRLQSGEVRMILGTCRATVGVVGNEQHGLVNLGKAGRSRWKGIRPTVRGSVMNPNDHPHGGGEGKAPVGRKAPSTPWGKPALGLKTRNKKAKSDKLIVRRRNEK</sequence>
<organism>
    <name type="scientific">Streptococcus pneumoniae (strain ATCC 700669 / Spain 23F-1)</name>
    <dbReference type="NCBI Taxonomy" id="561276"/>
    <lineage>
        <taxon>Bacteria</taxon>
        <taxon>Bacillati</taxon>
        <taxon>Bacillota</taxon>
        <taxon>Bacilli</taxon>
        <taxon>Lactobacillales</taxon>
        <taxon>Streptococcaceae</taxon>
        <taxon>Streptococcus</taxon>
    </lineage>
</organism>
<gene>
    <name evidence="1" type="primary">rplB</name>
    <name type="ordered locus">SPN23F02020</name>
</gene>